<sequence length="84" mass="9168">MSEFWLCFSCCIAEQPQPKRRRRIDRSMIGEPTNFAHTAHVGSGDLFSGMNSVSSIQNQMQSKGGYGGGMPANVQMQLVDTKAG</sequence>
<comment type="function">
    <text evidence="1">Probably involved in the organization of the actin cytoskeleton by acting downstream of CDC42, inducing actin filament assembly. Alters CDC42-induced cell shape changes. In activated T-cells, may play a role in CDC42-mediated F-actin accumulation at the immunological synapse. May play a role in early contractile events in phagocytosis in macrophages (By similarity).</text>
</comment>
<comment type="subunit">
    <text evidence="1">Interacts with CDC42 (in GTP-bound form). Interacts weakly with RAC1 and not at all with RHOA (By similarity).</text>
</comment>
<comment type="subcellular location">
    <subcellularLocation>
        <location evidence="1">Cytoplasm</location>
        <location evidence="1">Cytoskeleton</location>
    </subcellularLocation>
    <subcellularLocation>
        <location evidence="1">Cell membrane</location>
        <topology evidence="1">Lipid-anchor</topology>
    </subcellularLocation>
    <subcellularLocation>
        <location evidence="1">Cell projection</location>
        <location evidence="1">Phagocytic cup</location>
    </subcellularLocation>
    <text evidence="1">Recruited to the activated TCR prior actin polymerization. Localizes at the phagocytic cup of macrophages.</text>
</comment>
<comment type="domain">
    <text evidence="1">The CRIB domain mediates interaction with CDC42.</text>
</comment>
<comment type="similarity">
    <text evidence="4">Belongs to the CDC42SE/SPEC family.</text>
</comment>
<accession>Q5R4F8</accession>
<gene>
    <name type="primary">CDC42SE2</name>
</gene>
<evidence type="ECO:0000250" key="1"/>
<evidence type="ECO:0000250" key="2">
    <source>
        <dbReference type="UniProtKB" id="Q8BGH7"/>
    </source>
</evidence>
<evidence type="ECO:0000255" key="3">
    <source>
        <dbReference type="PROSITE-ProRule" id="PRU00057"/>
    </source>
</evidence>
<evidence type="ECO:0000305" key="4"/>
<dbReference type="EMBL" id="CR861291">
    <property type="protein sequence ID" value="CAH93358.1"/>
    <property type="molecule type" value="mRNA"/>
</dbReference>
<dbReference type="RefSeq" id="NP_001126978.1">
    <property type="nucleotide sequence ID" value="NM_001133506.1"/>
</dbReference>
<dbReference type="STRING" id="9601.ENSPPYP00000017611"/>
<dbReference type="GeneID" id="100173997"/>
<dbReference type="KEGG" id="pon:100173997"/>
<dbReference type="CTD" id="56990"/>
<dbReference type="eggNOG" id="ENOG502S22R">
    <property type="taxonomic scope" value="Eukaryota"/>
</dbReference>
<dbReference type="InParanoid" id="Q5R4F8"/>
<dbReference type="OrthoDB" id="5559822at2759"/>
<dbReference type="Proteomes" id="UP000001595">
    <property type="component" value="Unplaced"/>
</dbReference>
<dbReference type="GO" id="GO:0042995">
    <property type="term" value="C:cell projection"/>
    <property type="evidence" value="ECO:0007669"/>
    <property type="project" value="UniProtKB-KW"/>
</dbReference>
<dbReference type="GO" id="GO:0005737">
    <property type="term" value="C:cytoplasm"/>
    <property type="evidence" value="ECO:0007669"/>
    <property type="project" value="UniProtKB-KW"/>
</dbReference>
<dbReference type="GO" id="GO:0005856">
    <property type="term" value="C:cytoskeleton"/>
    <property type="evidence" value="ECO:0007669"/>
    <property type="project" value="UniProtKB-SubCell"/>
</dbReference>
<dbReference type="GO" id="GO:0001891">
    <property type="term" value="C:phagocytic cup"/>
    <property type="evidence" value="ECO:0007669"/>
    <property type="project" value="UniProtKB-SubCell"/>
</dbReference>
<dbReference type="GO" id="GO:0005886">
    <property type="term" value="C:plasma membrane"/>
    <property type="evidence" value="ECO:0000250"/>
    <property type="project" value="UniProtKB"/>
</dbReference>
<dbReference type="GO" id="GO:0031267">
    <property type="term" value="F:small GTPase binding"/>
    <property type="evidence" value="ECO:0007669"/>
    <property type="project" value="InterPro"/>
</dbReference>
<dbReference type="GO" id="GO:0006909">
    <property type="term" value="P:phagocytosis"/>
    <property type="evidence" value="ECO:0007669"/>
    <property type="project" value="UniProtKB-KW"/>
</dbReference>
<dbReference type="GO" id="GO:0008360">
    <property type="term" value="P:regulation of cell shape"/>
    <property type="evidence" value="ECO:0007669"/>
    <property type="project" value="UniProtKB-KW"/>
</dbReference>
<dbReference type="GO" id="GO:0035023">
    <property type="term" value="P:regulation of Rho protein signal transduction"/>
    <property type="evidence" value="ECO:0007669"/>
    <property type="project" value="InterPro"/>
</dbReference>
<dbReference type="GO" id="GO:0009966">
    <property type="term" value="P:regulation of signal transduction"/>
    <property type="evidence" value="ECO:0000250"/>
    <property type="project" value="UniProtKB"/>
</dbReference>
<dbReference type="CDD" id="cd00132">
    <property type="entry name" value="CRIB"/>
    <property type="match status" value="1"/>
</dbReference>
<dbReference type="FunFam" id="3.90.810.10:FF:000004">
    <property type="entry name" value="CDC42 small effector protein 2"/>
    <property type="match status" value="1"/>
</dbReference>
<dbReference type="Gene3D" id="3.90.810.10">
    <property type="entry name" value="CRIB domain"/>
    <property type="match status" value="1"/>
</dbReference>
<dbReference type="InterPro" id="IPR000095">
    <property type="entry name" value="CRIB_dom"/>
</dbReference>
<dbReference type="InterPro" id="IPR036936">
    <property type="entry name" value="CRIB_dom_sf"/>
</dbReference>
<dbReference type="InterPro" id="IPR039056">
    <property type="entry name" value="SPEC"/>
</dbReference>
<dbReference type="PANTHER" id="PTHR13502:SF4">
    <property type="entry name" value="CDC42 SMALL EFFECTOR PROTEIN 2"/>
    <property type="match status" value="1"/>
</dbReference>
<dbReference type="PANTHER" id="PTHR13502">
    <property type="entry name" value="CDC42 SMALL EFFECTOR PROTEIN HOMOLOG"/>
    <property type="match status" value="1"/>
</dbReference>
<dbReference type="Pfam" id="PF00786">
    <property type="entry name" value="PBD"/>
    <property type="match status" value="1"/>
</dbReference>
<dbReference type="PROSITE" id="PS50108">
    <property type="entry name" value="CRIB"/>
    <property type="match status" value="1"/>
</dbReference>
<organism>
    <name type="scientific">Pongo abelii</name>
    <name type="common">Sumatran orangutan</name>
    <name type="synonym">Pongo pygmaeus abelii</name>
    <dbReference type="NCBI Taxonomy" id="9601"/>
    <lineage>
        <taxon>Eukaryota</taxon>
        <taxon>Metazoa</taxon>
        <taxon>Chordata</taxon>
        <taxon>Craniata</taxon>
        <taxon>Vertebrata</taxon>
        <taxon>Euteleostomi</taxon>
        <taxon>Mammalia</taxon>
        <taxon>Eutheria</taxon>
        <taxon>Euarchontoglires</taxon>
        <taxon>Primates</taxon>
        <taxon>Haplorrhini</taxon>
        <taxon>Catarrhini</taxon>
        <taxon>Hominidae</taxon>
        <taxon>Pongo</taxon>
    </lineage>
</organism>
<protein>
    <recommendedName>
        <fullName>CDC42 small effector protein 2</fullName>
    </recommendedName>
</protein>
<feature type="chain" id="PRO_0000334641" description="CDC42 small effector protein 2">
    <location>
        <begin position="1"/>
        <end position="84"/>
    </location>
</feature>
<feature type="domain" description="CRIB" evidence="3">
    <location>
        <begin position="29"/>
        <end position="42"/>
    </location>
</feature>
<feature type="modified residue" description="Phosphoserine" evidence="2">
    <location>
        <position position="43"/>
    </location>
</feature>
<feature type="modified residue" description="Phosphoserine" evidence="2">
    <location>
        <position position="52"/>
    </location>
</feature>
<feature type="lipid moiety-binding region" description="S-palmitoyl cysteine" evidence="1">
    <location>
        <position position="10"/>
    </location>
</feature>
<feature type="lipid moiety-binding region" description="S-palmitoyl cysteine" evidence="1">
    <location>
        <position position="11"/>
    </location>
</feature>
<proteinExistence type="inferred from homology"/>
<reference key="1">
    <citation type="submission" date="2004-11" db="EMBL/GenBank/DDBJ databases">
        <authorList>
            <consortium name="The German cDNA consortium"/>
        </authorList>
    </citation>
    <scope>NUCLEOTIDE SEQUENCE [LARGE SCALE MRNA]</scope>
    <source>
        <tissue>Brain cortex</tissue>
    </source>
</reference>
<keyword id="KW-1003">Cell membrane</keyword>
<keyword id="KW-0966">Cell projection</keyword>
<keyword id="KW-0133">Cell shape</keyword>
<keyword id="KW-0963">Cytoplasm</keyword>
<keyword id="KW-0206">Cytoskeleton</keyword>
<keyword id="KW-0449">Lipoprotein</keyword>
<keyword id="KW-0472">Membrane</keyword>
<keyword id="KW-0564">Palmitate</keyword>
<keyword id="KW-0581">Phagocytosis</keyword>
<keyword id="KW-0597">Phosphoprotein</keyword>
<keyword id="KW-1185">Reference proteome</keyword>
<name>C42S2_PONAB</name>